<name>RUVC_ECO57</name>
<dbReference type="EC" id="3.1.21.10" evidence="2"/>
<dbReference type="EMBL" id="AE005174">
    <property type="protein sequence ID" value="AAG56853.1"/>
    <property type="molecule type" value="Genomic_DNA"/>
</dbReference>
<dbReference type="EMBL" id="BA000007">
    <property type="protein sequence ID" value="BAB35996.1"/>
    <property type="molecule type" value="Genomic_DNA"/>
</dbReference>
<dbReference type="PIR" id="A85799">
    <property type="entry name" value="A85799"/>
</dbReference>
<dbReference type="PIR" id="E90950">
    <property type="entry name" value="E90950"/>
</dbReference>
<dbReference type="RefSeq" id="NP_310600.1">
    <property type="nucleotide sequence ID" value="NC_002695.1"/>
</dbReference>
<dbReference type="RefSeq" id="WP_001295503.1">
    <property type="nucleotide sequence ID" value="NZ_VOAI01000010.1"/>
</dbReference>
<dbReference type="SMR" id="P0A816"/>
<dbReference type="STRING" id="155864.Z2915"/>
<dbReference type="GeneID" id="89516631"/>
<dbReference type="GeneID" id="912572"/>
<dbReference type="KEGG" id="ece:Z2915"/>
<dbReference type="KEGG" id="ecs:ECs_2573"/>
<dbReference type="PATRIC" id="fig|386585.9.peg.2697"/>
<dbReference type="eggNOG" id="COG0817">
    <property type="taxonomic scope" value="Bacteria"/>
</dbReference>
<dbReference type="HOGENOM" id="CLU_091257_2_1_6"/>
<dbReference type="OMA" id="AICHIWR"/>
<dbReference type="Proteomes" id="UP000000558">
    <property type="component" value="Chromosome"/>
</dbReference>
<dbReference type="Proteomes" id="UP000002519">
    <property type="component" value="Chromosome"/>
</dbReference>
<dbReference type="GO" id="GO:0005737">
    <property type="term" value="C:cytoplasm"/>
    <property type="evidence" value="ECO:0007669"/>
    <property type="project" value="UniProtKB-SubCell"/>
</dbReference>
<dbReference type="GO" id="GO:0048476">
    <property type="term" value="C:Holliday junction resolvase complex"/>
    <property type="evidence" value="ECO:0007669"/>
    <property type="project" value="UniProtKB-UniRule"/>
</dbReference>
<dbReference type="GO" id="GO:0008821">
    <property type="term" value="F:crossover junction DNA endonuclease activity"/>
    <property type="evidence" value="ECO:0007669"/>
    <property type="project" value="UniProtKB-UniRule"/>
</dbReference>
<dbReference type="GO" id="GO:0003677">
    <property type="term" value="F:DNA binding"/>
    <property type="evidence" value="ECO:0007669"/>
    <property type="project" value="UniProtKB-KW"/>
</dbReference>
<dbReference type="GO" id="GO:0000287">
    <property type="term" value="F:magnesium ion binding"/>
    <property type="evidence" value="ECO:0007669"/>
    <property type="project" value="UniProtKB-UniRule"/>
</dbReference>
<dbReference type="GO" id="GO:0006310">
    <property type="term" value="P:DNA recombination"/>
    <property type="evidence" value="ECO:0007669"/>
    <property type="project" value="UniProtKB-UniRule"/>
</dbReference>
<dbReference type="GO" id="GO:0006281">
    <property type="term" value="P:DNA repair"/>
    <property type="evidence" value="ECO:0007669"/>
    <property type="project" value="UniProtKB-UniRule"/>
</dbReference>
<dbReference type="CDD" id="cd16962">
    <property type="entry name" value="RuvC"/>
    <property type="match status" value="1"/>
</dbReference>
<dbReference type="FunFam" id="3.30.420.10:FF:000002">
    <property type="entry name" value="Crossover junction endodeoxyribonuclease RuvC"/>
    <property type="match status" value="1"/>
</dbReference>
<dbReference type="Gene3D" id="3.30.420.10">
    <property type="entry name" value="Ribonuclease H-like superfamily/Ribonuclease H"/>
    <property type="match status" value="1"/>
</dbReference>
<dbReference type="HAMAP" id="MF_00034">
    <property type="entry name" value="RuvC"/>
    <property type="match status" value="1"/>
</dbReference>
<dbReference type="InterPro" id="IPR012337">
    <property type="entry name" value="RNaseH-like_sf"/>
</dbReference>
<dbReference type="InterPro" id="IPR036397">
    <property type="entry name" value="RNaseH_sf"/>
</dbReference>
<dbReference type="InterPro" id="IPR020563">
    <property type="entry name" value="X-over_junc_endoDNase_Mg_BS"/>
</dbReference>
<dbReference type="InterPro" id="IPR002176">
    <property type="entry name" value="X-over_junc_endoDNase_RuvC"/>
</dbReference>
<dbReference type="NCBIfam" id="NF000711">
    <property type="entry name" value="PRK00039.2-1"/>
    <property type="match status" value="1"/>
</dbReference>
<dbReference type="NCBIfam" id="TIGR00228">
    <property type="entry name" value="ruvC"/>
    <property type="match status" value="1"/>
</dbReference>
<dbReference type="PANTHER" id="PTHR30194">
    <property type="entry name" value="CROSSOVER JUNCTION ENDODEOXYRIBONUCLEASE RUVC"/>
    <property type="match status" value="1"/>
</dbReference>
<dbReference type="PANTHER" id="PTHR30194:SF3">
    <property type="entry name" value="CROSSOVER JUNCTION ENDODEOXYRIBONUCLEASE RUVC"/>
    <property type="match status" value="1"/>
</dbReference>
<dbReference type="Pfam" id="PF02075">
    <property type="entry name" value="RuvC"/>
    <property type="match status" value="1"/>
</dbReference>
<dbReference type="PRINTS" id="PR00696">
    <property type="entry name" value="RSOLVASERUVC"/>
</dbReference>
<dbReference type="SUPFAM" id="SSF53098">
    <property type="entry name" value="Ribonuclease H-like"/>
    <property type="match status" value="1"/>
</dbReference>
<dbReference type="PROSITE" id="PS01321">
    <property type="entry name" value="RUVC"/>
    <property type="match status" value="1"/>
</dbReference>
<reference key="1">
    <citation type="journal article" date="2001" name="Nature">
        <title>Genome sequence of enterohaemorrhagic Escherichia coli O157:H7.</title>
        <authorList>
            <person name="Perna N.T."/>
            <person name="Plunkett G. III"/>
            <person name="Burland V."/>
            <person name="Mau B."/>
            <person name="Glasner J.D."/>
            <person name="Rose D.J."/>
            <person name="Mayhew G.F."/>
            <person name="Evans P.S."/>
            <person name="Gregor J."/>
            <person name="Kirkpatrick H.A."/>
            <person name="Posfai G."/>
            <person name="Hackett J."/>
            <person name="Klink S."/>
            <person name="Boutin A."/>
            <person name="Shao Y."/>
            <person name="Miller L."/>
            <person name="Grotbeck E.J."/>
            <person name="Davis N.W."/>
            <person name="Lim A."/>
            <person name="Dimalanta E.T."/>
            <person name="Potamousis K."/>
            <person name="Apodaca J."/>
            <person name="Anantharaman T.S."/>
            <person name="Lin J."/>
            <person name="Yen G."/>
            <person name="Schwartz D.C."/>
            <person name="Welch R.A."/>
            <person name="Blattner F.R."/>
        </authorList>
    </citation>
    <scope>NUCLEOTIDE SEQUENCE [LARGE SCALE GENOMIC DNA]</scope>
    <source>
        <strain>O157:H7 / EDL933 / ATCC 700927 / EHEC</strain>
    </source>
</reference>
<reference key="2">
    <citation type="journal article" date="2001" name="DNA Res.">
        <title>Complete genome sequence of enterohemorrhagic Escherichia coli O157:H7 and genomic comparison with a laboratory strain K-12.</title>
        <authorList>
            <person name="Hayashi T."/>
            <person name="Makino K."/>
            <person name="Ohnishi M."/>
            <person name="Kurokawa K."/>
            <person name="Ishii K."/>
            <person name="Yokoyama K."/>
            <person name="Han C.-G."/>
            <person name="Ohtsubo E."/>
            <person name="Nakayama K."/>
            <person name="Murata T."/>
            <person name="Tanaka M."/>
            <person name="Tobe T."/>
            <person name="Iida T."/>
            <person name="Takami H."/>
            <person name="Honda T."/>
            <person name="Sasakawa C."/>
            <person name="Ogasawara N."/>
            <person name="Yasunaga T."/>
            <person name="Kuhara S."/>
            <person name="Shiba T."/>
            <person name="Hattori M."/>
            <person name="Shinagawa H."/>
        </authorList>
    </citation>
    <scope>NUCLEOTIDE SEQUENCE [LARGE SCALE GENOMIC DNA]</scope>
    <source>
        <strain>O157:H7 / Sakai / RIMD 0509952 / EHEC</strain>
    </source>
</reference>
<gene>
    <name evidence="2" type="primary">ruvC</name>
    <name type="ordered locus">Z2915</name>
    <name type="ordered locus">ECs2573</name>
</gene>
<keyword id="KW-0963">Cytoplasm</keyword>
<keyword id="KW-0227">DNA damage</keyword>
<keyword id="KW-0233">DNA recombination</keyword>
<keyword id="KW-0234">DNA repair</keyword>
<keyword id="KW-0238">DNA-binding</keyword>
<keyword id="KW-0255">Endonuclease</keyword>
<keyword id="KW-0378">Hydrolase</keyword>
<keyword id="KW-0460">Magnesium</keyword>
<keyword id="KW-0479">Metal-binding</keyword>
<keyword id="KW-0540">Nuclease</keyword>
<keyword id="KW-1185">Reference proteome</keyword>
<comment type="function">
    <text evidence="2">The RuvA-RuvB-RuvC complex processes Holliday junction (HJ) DNA during genetic recombination and DNA repair. Endonuclease that resolves HJ intermediates. Cleaves cruciform DNA by making single-stranded nicks across the HJ at symmetrical positions within the homologous arms, yielding a 5'-phosphate and a 3'-hydroxyl group; requires a central core of homology in the junction. The consensus cleavage sequence is 5'-(A/T)TT(C/G)-3'. Cleavage occurs on the 3'-side of the TT dinucleotide at the point of strand exchange. HJ branch migration catalyzed by RuvA-RuvB allows RuvC to scan DNA until it finds its consensus sequence, where it cleaves and resolves the cruciform DNA.</text>
</comment>
<comment type="catalytic activity">
    <reaction evidence="2">
        <text>Endonucleolytic cleavage at a junction such as a reciprocal single-stranded crossover between two homologous DNA duplexes (Holliday junction).</text>
        <dbReference type="EC" id="3.1.21.10"/>
    </reaction>
</comment>
<comment type="cofactor">
    <cofactor evidence="2">
        <name>Mg(2+)</name>
        <dbReference type="ChEBI" id="CHEBI:18420"/>
    </cofactor>
    <text evidence="2">Binds 2 Mg(2+) ion per subunit.</text>
</comment>
<comment type="subunit">
    <text evidence="2">Homodimer which binds Holliday junction (HJ) DNA. The HJ becomes 2-fold symmetrical on binding to RuvC with unstacked arms; it has a different conformation from HJ DNA in complex with RuvA. In the full resolvosome a probable DNA-RuvA(4)-RuvB(12)-RuvC(2) complex forms which resolves the HJ.</text>
</comment>
<comment type="subcellular location">
    <subcellularLocation>
        <location evidence="2">Cytoplasm</location>
    </subcellularLocation>
</comment>
<comment type="similarity">
    <text evidence="2 3">Belongs to the RuvC family.</text>
</comment>
<evidence type="ECO:0000250" key="1"/>
<evidence type="ECO:0000255" key="2">
    <source>
        <dbReference type="HAMAP-Rule" id="MF_00034"/>
    </source>
</evidence>
<evidence type="ECO:0000305" key="3"/>
<proteinExistence type="inferred from homology"/>
<organism>
    <name type="scientific">Escherichia coli O157:H7</name>
    <dbReference type="NCBI Taxonomy" id="83334"/>
    <lineage>
        <taxon>Bacteria</taxon>
        <taxon>Pseudomonadati</taxon>
        <taxon>Pseudomonadota</taxon>
        <taxon>Gammaproteobacteria</taxon>
        <taxon>Enterobacterales</taxon>
        <taxon>Enterobacteriaceae</taxon>
        <taxon>Escherichia</taxon>
    </lineage>
</organism>
<protein>
    <recommendedName>
        <fullName evidence="2">Crossover junction endodeoxyribonuclease RuvC</fullName>
        <ecNumber evidence="2">3.1.21.10</ecNumber>
    </recommendedName>
    <alternativeName>
        <fullName evidence="2">Holliday junction nuclease RuvC</fullName>
    </alternativeName>
    <alternativeName>
        <fullName evidence="2">Holliday junction resolvase RuvC</fullName>
    </alternativeName>
</protein>
<accession>P0A816</accession>
<accession>P24239</accession>
<feature type="initiator methionine" description="Removed" evidence="1">
    <location>
        <position position="1"/>
    </location>
</feature>
<feature type="chain" id="PRO_0000183097" description="Crossover junction endodeoxyribonuclease RuvC">
    <location>
        <begin position="2"/>
        <end position="173"/>
    </location>
</feature>
<feature type="active site" evidence="2">
    <location>
        <position position="8"/>
    </location>
</feature>
<feature type="active site" evidence="2">
    <location>
        <position position="67"/>
    </location>
</feature>
<feature type="active site" evidence="2">
    <location>
        <position position="139"/>
    </location>
</feature>
<feature type="binding site" evidence="2">
    <location>
        <position position="8"/>
    </location>
    <ligand>
        <name>Mg(2+)</name>
        <dbReference type="ChEBI" id="CHEBI:18420"/>
        <label>1</label>
    </ligand>
</feature>
<feature type="binding site" evidence="2">
    <location>
        <position position="67"/>
    </location>
    <ligand>
        <name>Mg(2+)</name>
        <dbReference type="ChEBI" id="CHEBI:18420"/>
        <label>2</label>
    </ligand>
</feature>
<feature type="binding site" evidence="2">
    <location>
        <position position="139"/>
    </location>
    <ligand>
        <name>Mg(2+)</name>
        <dbReference type="ChEBI" id="CHEBI:18420"/>
        <label>1</label>
    </ligand>
</feature>
<sequence length="173" mass="18747">MAIILGIDPGSRVTGYGVIRQVGRQLSYLGSGCIRTKVDDLPSRLKLIYAGVTEIITQFQPDYFAIEQVFMAKNADSALKLGQARGVAIVAAVNQELPVFEYAARQVKQTVVGIGSAEKSQVQHMVRTLLKLPANPQADAADALAIAITHCHVSQNAMQMSESRLNLARGRLR</sequence>